<gene>
    <name evidence="1" type="primary">rpsF</name>
    <name type="ordered locus">Ajs_3216</name>
</gene>
<organism>
    <name type="scientific">Acidovorax sp. (strain JS42)</name>
    <dbReference type="NCBI Taxonomy" id="232721"/>
    <lineage>
        <taxon>Bacteria</taxon>
        <taxon>Pseudomonadati</taxon>
        <taxon>Pseudomonadota</taxon>
        <taxon>Betaproteobacteria</taxon>
        <taxon>Burkholderiales</taxon>
        <taxon>Comamonadaceae</taxon>
        <taxon>Acidovorax</taxon>
    </lineage>
</organism>
<sequence>MRHYEIILLIHPDQSEQVPAMLERYKGMIVAGGGQVHRVEDWGRRQLAYLINKLAKAHYLCLNIEADQAVMAELEHAFKFNDAVLRHLTVQKKKAETGASSMMKTVEREEARKASQAEFAASNER</sequence>
<proteinExistence type="inferred from homology"/>
<name>RS6_ACISJ</name>
<dbReference type="EMBL" id="CP000539">
    <property type="protein sequence ID" value="ABM43339.1"/>
    <property type="molecule type" value="Genomic_DNA"/>
</dbReference>
<dbReference type="SMR" id="A1WAR4"/>
<dbReference type="STRING" id="232721.Ajs_3216"/>
<dbReference type="KEGG" id="ajs:Ajs_3216"/>
<dbReference type="eggNOG" id="COG0360">
    <property type="taxonomic scope" value="Bacteria"/>
</dbReference>
<dbReference type="HOGENOM" id="CLU_113441_6_1_4"/>
<dbReference type="Proteomes" id="UP000000645">
    <property type="component" value="Chromosome"/>
</dbReference>
<dbReference type="GO" id="GO:0022627">
    <property type="term" value="C:cytosolic small ribosomal subunit"/>
    <property type="evidence" value="ECO:0007669"/>
    <property type="project" value="TreeGrafter"/>
</dbReference>
<dbReference type="GO" id="GO:0070181">
    <property type="term" value="F:small ribosomal subunit rRNA binding"/>
    <property type="evidence" value="ECO:0007669"/>
    <property type="project" value="TreeGrafter"/>
</dbReference>
<dbReference type="GO" id="GO:0003735">
    <property type="term" value="F:structural constituent of ribosome"/>
    <property type="evidence" value="ECO:0007669"/>
    <property type="project" value="InterPro"/>
</dbReference>
<dbReference type="GO" id="GO:0006412">
    <property type="term" value="P:translation"/>
    <property type="evidence" value="ECO:0007669"/>
    <property type="project" value="UniProtKB-UniRule"/>
</dbReference>
<dbReference type="CDD" id="cd00473">
    <property type="entry name" value="bS6"/>
    <property type="match status" value="1"/>
</dbReference>
<dbReference type="Gene3D" id="3.30.70.60">
    <property type="match status" value="1"/>
</dbReference>
<dbReference type="HAMAP" id="MF_00360">
    <property type="entry name" value="Ribosomal_bS6"/>
    <property type="match status" value="1"/>
</dbReference>
<dbReference type="InterPro" id="IPR000529">
    <property type="entry name" value="Ribosomal_bS6"/>
</dbReference>
<dbReference type="InterPro" id="IPR020815">
    <property type="entry name" value="Ribosomal_bS6_CS"/>
</dbReference>
<dbReference type="InterPro" id="IPR035980">
    <property type="entry name" value="Ribosomal_bS6_sf"/>
</dbReference>
<dbReference type="InterPro" id="IPR020814">
    <property type="entry name" value="Ribosomal_S6_plastid/chlpt"/>
</dbReference>
<dbReference type="InterPro" id="IPR014717">
    <property type="entry name" value="Transl_elong_EF1B/ribsomal_bS6"/>
</dbReference>
<dbReference type="NCBIfam" id="TIGR00166">
    <property type="entry name" value="S6"/>
    <property type="match status" value="1"/>
</dbReference>
<dbReference type="PANTHER" id="PTHR21011">
    <property type="entry name" value="MITOCHONDRIAL 28S RIBOSOMAL PROTEIN S6"/>
    <property type="match status" value="1"/>
</dbReference>
<dbReference type="PANTHER" id="PTHR21011:SF1">
    <property type="entry name" value="SMALL RIBOSOMAL SUBUNIT PROTEIN BS6M"/>
    <property type="match status" value="1"/>
</dbReference>
<dbReference type="Pfam" id="PF01250">
    <property type="entry name" value="Ribosomal_S6"/>
    <property type="match status" value="1"/>
</dbReference>
<dbReference type="SUPFAM" id="SSF54995">
    <property type="entry name" value="Ribosomal protein S6"/>
    <property type="match status" value="1"/>
</dbReference>
<dbReference type="PROSITE" id="PS01048">
    <property type="entry name" value="RIBOSOMAL_S6"/>
    <property type="match status" value="1"/>
</dbReference>
<protein>
    <recommendedName>
        <fullName evidence="1">Small ribosomal subunit protein bS6</fullName>
    </recommendedName>
    <alternativeName>
        <fullName evidence="3">30S ribosomal protein S6</fullName>
    </alternativeName>
</protein>
<keyword id="KW-0687">Ribonucleoprotein</keyword>
<keyword id="KW-0689">Ribosomal protein</keyword>
<keyword id="KW-0694">RNA-binding</keyword>
<keyword id="KW-0699">rRNA-binding</keyword>
<comment type="function">
    <text evidence="1">Binds together with bS18 to 16S ribosomal RNA.</text>
</comment>
<comment type="similarity">
    <text evidence="1">Belongs to the bacterial ribosomal protein bS6 family.</text>
</comment>
<reference key="1">
    <citation type="submission" date="2006-12" db="EMBL/GenBank/DDBJ databases">
        <title>Complete sequence of chromosome 1 of Acidovorax sp. JS42.</title>
        <authorList>
            <person name="Copeland A."/>
            <person name="Lucas S."/>
            <person name="Lapidus A."/>
            <person name="Barry K."/>
            <person name="Detter J.C."/>
            <person name="Glavina del Rio T."/>
            <person name="Dalin E."/>
            <person name="Tice H."/>
            <person name="Pitluck S."/>
            <person name="Chertkov O."/>
            <person name="Brettin T."/>
            <person name="Bruce D."/>
            <person name="Han C."/>
            <person name="Tapia R."/>
            <person name="Gilna P."/>
            <person name="Schmutz J."/>
            <person name="Larimer F."/>
            <person name="Land M."/>
            <person name="Hauser L."/>
            <person name="Kyrpides N."/>
            <person name="Kim E."/>
            <person name="Stahl D."/>
            <person name="Richardson P."/>
        </authorList>
    </citation>
    <scope>NUCLEOTIDE SEQUENCE [LARGE SCALE GENOMIC DNA]</scope>
    <source>
        <strain>JS42</strain>
    </source>
</reference>
<accession>A1WAR4</accession>
<evidence type="ECO:0000255" key="1">
    <source>
        <dbReference type="HAMAP-Rule" id="MF_00360"/>
    </source>
</evidence>
<evidence type="ECO:0000256" key="2">
    <source>
        <dbReference type="SAM" id="MobiDB-lite"/>
    </source>
</evidence>
<evidence type="ECO:0000305" key="3"/>
<feature type="chain" id="PRO_1000005206" description="Small ribosomal subunit protein bS6">
    <location>
        <begin position="1"/>
        <end position="125"/>
    </location>
</feature>
<feature type="region of interest" description="Disordered" evidence="2">
    <location>
        <begin position="94"/>
        <end position="125"/>
    </location>
</feature>
<feature type="compositionally biased region" description="Basic and acidic residues" evidence="2">
    <location>
        <begin position="105"/>
        <end position="115"/>
    </location>
</feature>